<name>EFNMT_HUMAN</name>
<feature type="chain" id="PRO_0000050779" description="eEF1A lysine and N-terminal methyltransferase">
    <location>
        <begin position="1"/>
        <end position="699"/>
    </location>
</feature>
<feature type="region of interest" description="Disordered" evidence="1">
    <location>
        <begin position="433"/>
        <end position="459"/>
    </location>
</feature>
<feature type="compositionally biased region" description="Basic residues" evidence="1">
    <location>
        <begin position="436"/>
        <end position="448"/>
    </location>
</feature>
<feature type="modified residue" description="N-acetylmethionine" evidence="19">
    <location>
        <position position="1"/>
    </location>
</feature>
<feature type="modified residue" description="Phosphoserine" evidence="18 20">
    <location>
        <position position="267"/>
    </location>
</feature>
<feature type="splice variant" id="VSP_013919" description="In isoform 3 and isoform 5." evidence="9">
    <location>
        <begin position="1"/>
        <end position="86"/>
    </location>
</feature>
<feature type="splice variant" id="VSP_013920" description="In isoform 4." evidence="14">
    <location>
        <begin position="151"/>
        <end position="306"/>
    </location>
</feature>
<feature type="splice variant" id="VSP_013921" description="In isoform 5." evidence="9">
    <location>
        <begin position="289"/>
        <end position="505"/>
    </location>
</feature>
<feature type="splice variant" id="VSP_013922" description="In isoform 2." evidence="8">
    <location>
        <begin position="643"/>
        <end position="699"/>
    </location>
</feature>
<feature type="sequence variant" id="VAR_064730" description="Found in a renal cell carcinoma sample; somatic mutation; dbSNP:rs774565178." evidence="3">
    <original>Y</original>
    <variation>C</variation>
    <location>
        <position position="16"/>
    </location>
</feature>
<feature type="sequence variant" id="VAR_034040" description="In dbSNP:rs2232816." evidence="2">
    <original>M</original>
    <variation>V</variation>
    <location>
        <position position="105"/>
    </location>
</feature>
<feature type="sequence variant" id="VAR_034041" description="In dbSNP:rs2232819.">
    <original>M</original>
    <variation>I</variation>
    <location>
        <position position="359"/>
    </location>
</feature>
<feature type="sequence variant" id="VAR_080810" description="Protective factor against deafness; individuals homozygous for GAB1 deafness-associated variants have normal hearing in the presence of Q-544; dbSNP:rs145666727." evidence="5">
    <original>R</original>
    <variation>Q</variation>
    <location>
        <position position="544"/>
    </location>
</feature>
<feature type="mutagenesis site" description="Decreased eEF1A lysine methyltransferase activity." evidence="7">
    <original>V</original>
    <variation>A</variation>
    <location>
        <position position="54"/>
    </location>
</feature>
<feature type="mutagenesis site" description="Loss of eEF1A lysine methyltransferase activity." evidence="7">
    <original>G</original>
    <variation>R</variation>
    <location>
        <position position="58"/>
    </location>
</feature>
<feature type="mutagenesis site" description="Loss of eEF1A lysine methyltransferase activity." evidence="7">
    <original>N</original>
    <variation>D</variation>
    <location>
        <position position="59"/>
    </location>
</feature>
<feature type="mutagenesis site" description="Loss of eEF1A lysine methyltransferase activity." evidence="7">
    <original>Y</original>
    <variation>A</variation>
    <location>
        <position position="67"/>
    </location>
</feature>
<feature type="mutagenesis site" description="Loss of eEF1A lysine methyltransferase activity." evidence="7">
    <original>Y</original>
    <variation>A</variation>
    <location>
        <position position="71"/>
    </location>
</feature>
<feature type="mutagenesis site" description="Loss of eEF1A lysine methyltransferase activity." evidence="7">
    <original>N</original>
    <variation>D</variation>
    <location>
        <position position="76"/>
    </location>
</feature>
<feature type="mutagenesis site" description="Loss of eEF1A lysine methyltransferase activity." evidence="7">
    <original>F</original>
    <variation>A</variation>
    <location>
        <position position="115"/>
    </location>
</feature>
<feature type="mutagenesis site" description="Loss of eEF1A lysine methyltransferase activity." evidence="7">
    <original>DK</original>
    <variation>AA</variation>
    <location>
        <begin position="120"/>
        <end position="121"/>
    </location>
</feature>
<feature type="mutagenesis site" description="Loss of eEF1A lysine methyltransferase activity." evidence="7">
    <original>Y</original>
    <variation>A</variation>
    <location>
        <position position="156"/>
    </location>
</feature>
<feature type="mutagenesis site" description="Loss of activity." evidence="6">
    <original>E</original>
    <variation>A</variation>
    <location>
        <position position="524"/>
    </location>
</feature>
<feature type="mutagenesis site" description="Decreased activity." evidence="6">
    <original>D</original>
    <variation>A</variation>
    <location>
        <position position="551"/>
    </location>
</feature>
<feature type="mutagenesis site" description="Loss of activity." evidence="6">
    <original>D</original>
    <variation>A</variation>
    <location>
        <position position="575"/>
    </location>
</feature>
<feature type="mutagenesis site" description="Decreased activity." evidence="6">
    <original>V</original>
    <variation>A</variation>
    <location>
        <position position="576"/>
    </location>
</feature>
<feature type="mutagenesis site" description="Decreased activity." evidence="6">
    <original>D</original>
    <variation>A</variation>
    <location>
        <position position="577"/>
    </location>
</feature>
<feature type="mutagenesis site" description="No effect on activity." evidence="6">
    <original>S</original>
    <variation>A</variation>
    <location>
        <position position="578"/>
    </location>
</feature>
<feature type="mutagenesis site" description="Decreased activity." evidence="6">
    <original>N</original>
    <variation>A</variation>
    <location>
        <position position="647"/>
    </location>
</feature>
<feature type="sequence conflict" description="In Ref. 6; BAD97213." evidence="15" ref="6">
    <original>F</original>
    <variation>L</variation>
    <location>
        <position position="115"/>
    </location>
</feature>
<feature type="sequence conflict" description="In Ref. 6; BAD97213." evidence="15" ref="6">
    <original>L</original>
    <variation>S</variation>
    <location>
        <position position="498"/>
    </location>
</feature>
<feature type="sequence conflict" description="In Ref. 5; BAB55240." evidence="15" ref="5">
    <original>H</original>
    <variation>Q</variation>
    <location>
        <position position="514"/>
    </location>
</feature>
<feature type="sequence conflict" description="In Ref. 5; BAC11055." evidence="15" ref="5">
    <original>T</original>
    <variation>F</variation>
    <location>
        <position position="534"/>
    </location>
</feature>
<feature type="helix" evidence="21">
    <location>
        <begin position="472"/>
        <end position="479"/>
    </location>
</feature>
<feature type="helix" evidence="21">
    <location>
        <begin position="480"/>
        <end position="483"/>
    </location>
</feature>
<feature type="helix" evidence="21">
    <location>
        <begin position="487"/>
        <end position="492"/>
    </location>
</feature>
<feature type="strand" evidence="21">
    <location>
        <begin position="495"/>
        <end position="500"/>
    </location>
</feature>
<feature type="helix" evidence="21">
    <location>
        <begin position="506"/>
        <end position="514"/>
    </location>
</feature>
<feature type="strand" evidence="21">
    <location>
        <begin position="518"/>
        <end position="525"/>
    </location>
</feature>
<feature type="helix" evidence="21">
    <location>
        <begin position="527"/>
        <end position="536"/>
    </location>
</feature>
<feature type="strand" evidence="21">
    <location>
        <begin position="545"/>
        <end position="550"/>
    </location>
</feature>
<feature type="helix" evidence="21">
    <location>
        <begin position="552"/>
        <end position="560"/>
    </location>
</feature>
<feature type="helix" evidence="21">
    <location>
        <begin position="563"/>
        <end position="565"/>
    </location>
</feature>
<feature type="strand" evidence="21">
    <location>
        <begin position="569"/>
        <end position="574"/>
    </location>
</feature>
<feature type="strand" evidence="21">
    <location>
        <begin position="582"/>
        <end position="584"/>
    </location>
</feature>
<feature type="helix" evidence="21">
    <location>
        <begin position="590"/>
        <end position="593"/>
    </location>
</feature>
<feature type="helix" evidence="21">
    <location>
        <begin position="595"/>
        <end position="603"/>
    </location>
</feature>
<feature type="strand" evidence="21">
    <location>
        <begin position="605"/>
        <end position="616"/>
    </location>
</feature>
<feature type="helix" evidence="21">
    <location>
        <begin position="620"/>
        <end position="633"/>
    </location>
</feature>
<feature type="strand" evidence="21">
    <location>
        <begin position="636"/>
        <end position="641"/>
    </location>
</feature>
<feature type="strand" evidence="21">
    <location>
        <begin position="648"/>
        <end position="654"/>
    </location>
</feature>
<feature type="helix" evidence="21">
    <location>
        <begin position="656"/>
        <end position="658"/>
    </location>
</feature>
<feature type="helix" evidence="21">
    <location>
        <begin position="662"/>
        <end position="677"/>
    </location>
</feature>
<feature type="helix" evidence="21">
    <location>
        <begin position="689"/>
        <end position="692"/>
    </location>
</feature>
<evidence type="ECO:0000256" key="1">
    <source>
        <dbReference type="SAM" id="MobiDB-lite"/>
    </source>
</evidence>
<evidence type="ECO:0000269" key="2">
    <source>
    </source>
</evidence>
<evidence type="ECO:0000269" key="3">
    <source>
    </source>
</evidence>
<evidence type="ECO:0000269" key="4">
    <source>
    </source>
</evidence>
<evidence type="ECO:0000269" key="5">
    <source>
    </source>
</evidence>
<evidence type="ECO:0000269" key="6">
    <source>
    </source>
</evidence>
<evidence type="ECO:0000269" key="7">
    <source>
    </source>
</evidence>
<evidence type="ECO:0000303" key="8">
    <source>
    </source>
</evidence>
<evidence type="ECO:0000303" key="9">
    <source>
    </source>
</evidence>
<evidence type="ECO:0000303" key="10">
    <source>
    </source>
</evidence>
<evidence type="ECO:0000303" key="11">
    <source>
    </source>
</evidence>
<evidence type="ECO:0000303" key="12">
    <source>
    </source>
</evidence>
<evidence type="ECO:0000303" key="13">
    <source>
    </source>
</evidence>
<evidence type="ECO:0000303" key="14">
    <source ref="1"/>
</evidence>
<evidence type="ECO:0000305" key="15"/>
<evidence type="ECO:0000305" key="16">
    <source>
    </source>
</evidence>
<evidence type="ECO:0000312" key="17">
    <source>
        <dbReference type="HGNC" id="HGNC:24248"/>
    </source>
</evidence>
<evidence type="ECO:0007744" key="18">
    <source>
    </source>
</evidence>
<evidence type="ECO:0007744" key="19">
    <source>
    </source>
</evidence>
<evidence type="ECO:0007744" key="20">
    <source>
    </source>
</evidence>
<evidence type="ECO:0007829" key="21">
    <source>
        <dbReference type="PDB" id="5WCJ"/>
    </source>
</evidence>
<proteinExistence type="evidence at protein level"/>
<comment type="function">
    <text evidence="6 7">Dual methyltransferase that catalyzes methylation of elongation factor 1-alpha (EEF1A1 and EEF1A2) at two different positions, and is therefore involved in the regulation of mRNA translation (PubMed:30143613, PubMed:30612740). Via its C-terminus, methylates EEF1A1 and EEF1A2 at the N-terminal residue 'Gly-2' (PubMed:30143613). Via its N-terminus dimethylates EEF1A1 and EEF1A2 at residue 'Lys-55' (PubMed:30143613, PubMed:30612740). Has no activity towards core histones H2A, H2B, H3 and H4 (PubMed:30612740).</text>
</comment>
<comment type="catalytic activity">
    <reaction evidence="6 7">
        <text>L-lysyl-[protein] + S-adenosyl-L-methionine = N(6)-methyl-L-lysyl-[protein] + S-adenosyl-L-homocysteine + H(+)</text>
        <dbReference type="Rhea" id="RHEA:51736"/>
        <dbReference type="Rhea" id="RHEA-COMP:9752"/>
        <dbReference type="Rhea" id="RHEA-COMP:13053"/>
        <dbReference type="ChEBI" id="CHEBI:15378"/>
        <dbReference type="ChEBI" id="CHEBI:29969"/>
        <dbReference type="ChEBI" id="CHEBI:57856"/>
        <dbReference type="ChEBI" id="CHEBI:59789"/>
        <dbReference type="ChEBI" id="CHEBI:61929"/>
    </reaction>
    <physiologicalReaction direction="left-to-right" evidence="6 7">
        <dbReference type="Rhea" id="RHEA:51737"/>
    </physiologicalReaction>
</comment>
<comment type="catalytic activity">
    <reaction evidence="6 7">
        <text>N(6)-methyl-L-lysyl-[protein] + S-adenosyl-L-methionine = N(6),N(6)-dimethyl-L-lysyl-[protein] + S-adenosyl-L-homocysteine + H(+)</text>
        <dbReference type="Rhea" id="RHEA:54196"/>
        <dbReference type="Rhea" id="RHEA-COMP:13053"/>
        <dbReference type="Rhea" id="RHEA-COMP:13827"/>
        <dbReference type="ChEBI" id="CHEBI:15378"/>
        <dbReference type="ChEBI" id="CHEBI:57856"/>
        <dbReference type="ChEBI" id="CHEBI:59789"/>
        <dbReference type="ChEBI" id="CHEBI:61929"/>
        <dbReference type="ChEBI" id="CHEBI:61976"/>
    </reaction>
    <physiologicalReaction direction="left-to-right" evidence="6 7">
        <dbReference type="Rhea" id="RHEA:54197"/>
    </physiologicalReaction>
</comment>
<comment type="catalytic activity">
    <reaction evidence="6">
        <text>N-terminal glycyl-L-lysyl-L-glutamyl-[protein] + 3 S-adenosyl-L-methionine = N-terminal N,N,N-trimethyl-glycyl-L-lysyl-L-glutamyl-[protein] + 3 S-adenosyl-L-homocysteine + 3 H(+)</text>
        <dbReference type="Rhea" id="RHEA:58440"/>
        <dbReference type="Rhea" id="RHEA-COMP:15140"/>
        <dbReference type="Rhea" id="RHEA-COMP:15143"/>
        <dbReference type="ChEBI" id="CHEBI:15378"/>
        <dbReference type="ChEBI" id="CHEBI:57856"/>
        <dbReference type="ChEBI" id="CHEBI:59789"/>
        <dbReference type="ChEBI" id="CHEBI:142597"/>
        <dbReference type="ChEBI" id="CHEBI:142600"/>
    </reaction>
    <physiologicalReaction direction="left-to-right" evidence="6 7">
        <dbReference type="Rhea" id="RHEA:58441"/>
    </physiologicalReaction>
</comment>
<comment type="activity regulation">
    <text evidence="6">Protein N-terminal methyltransferase activity is inhibited by GTP and GDP.</text>
</comment>
<comment type="subunit">
    <text evidence="5">Forms a tripartite complex containing GAB1, METTL13 and SPRY2 (PubMed:29408807). Within the complex interacts with GAB1 and SPRY2 (PubMed:29408807).</text>
</comment>
<comment type="interaction">
    <interactant intactId="EBI-1053295">
        <id>Q8N6R0</id>
    </interactant>
    <interactant intactId="EBI-11954292">
        <id>Q86V38</id>
        <label>ATN1</label>
    </interactant>
    <organismsDiffer>false</organismsDiffer>
    <experiments>3</experiments>
</comment>
<comment type="interaction">
    <interactant intactId="EBI-1053295">
        <id>Q8N6R0</id>
    </interactant>
    <interactant intactId="EBI-6875961">
        <id>P02489</id>
        <label>CRYAA</label>
    </interactant>
    <organismsDiffer>false</organismsDiffer>
    <experiments>3</experiments>
</comment>
<comment type="interaction">
    <interactant intactId="EBI-1053295">
        <id>Q8N6R0</id>
    </interactant>
    <interactant intactId="EBI-2432309">
        <id>Q92876</id>
        <label>KLK6</label>
    </interactant>
    <organismsDiffer>false</organismsDiffer>
    <experiments>3</experiments>
</comment>
<comment type="interaction">
    <interactant intactId="EBI-1053295">
        <id>Q8N6R0</id>
    </interactant>
    <interactant intactId="EBI-607085">
        <id>P09012</id>
        <label>SNRPA</label>
    </interactant>
    <organismsDiffer>false</organismsDiffer>
    <experiments>3</experiments>
</comment>
<comment type="interaction">
    <interactant intactId="EBI-1053295">
        <id>Q8N6R0</id>
    </interactant>
    <interactant intactId="EBI-741515">
        <id>Q9NVV9</id>
        <label>THAP1</label>
    </interactant>
    <organismsDiffer>false</organismsDiffer>
    <experiments>4</experiments>
</comment>
<comment type="interaction">
    <interactant intactId="EBI-1053295">
        <id>Q8N6R0</id>
    </interactant>
    <interactant intactId="EBI-355744">
        <id>Q12933</id>
        <label>TRAF2</label>
    </interactant>
    <organismsDiffer>false</organismsDiffer>
    <experiments>3</experiments>
</comment>
<comment type="interaction">
    <interactant intactId="EBI-1053295">
        <id>Q8N6R0</id>
    </interactant>
    <interactant intactId="EBI-2799833">
        <id>Q8N1B4</id>
        <label>VPS52</label>
    </interactant>
    <organismsDiffer>false</organismsDiffer>
    <experiments>3</experiments>
</comment>
<comment type="subcellular location">
    <subcellularLocation>
        <location evidence="4">Cytoplasm</location>
    </subcellularLocation>
    <subcellularLocation>
        <location evidence="4">Nucleus</location>
    </subcellularLocation>
    <subcellularLocation>
        <location evidence="4">Mitochondrion</location>
    </subcellularLocation>
</comment>
<comment type="alternative products">
    <event type="alternative splicing"/>
    <isoform>
        <id>Q8N6R0-5</id>
        <name>1</name>
        <sequence type="displayed"/>
    </isoform>
    <isoform>
        <id>Q8N6R0-4</id>
        <name>2</name>
        <sequence type="described" ref="VSP_013922"/>
    </isoform>
    <isoform>
        <id>Q8N6R0-3</id>
        <name>3</name>
        <sequence type="described" ref="VSP_013919"/>
    </isoform>
    <isoform>
        <id>Q8N6R0-1</id>
        <name>4</name>
        <sequence type="described" ref="VSP_013920"/>
    </isoform>
    <isoform>
        <id>Q8N6R0-2</id>
        <name>5</name>
        <sequence type="described" ref="VSP_013919 VSP_013921"/>
    </isoform>
</comment>
<comment type="polymorphism">
    <text evidence="5">Genetic variants in METTL13 define the deafness modifier locus DFNB26M [MIM:605429]. The DFNB26M phenotype is characterized by normal hearing despite the presence of homozygosity for a causative deafness mutation in the GAB1 gene.</text>
</comment>
<comment type="disease">
    <text evidence="7">METTL13 unregulation may be involved in tumorigenesis. High METTL13 expression has been observed in pancreatic and lung cancer tissues, correlates with overexpression of dimethylated elongation factor 1-alpha and is associated with poor clinical outcome. The disease mechanism involves dysregulation of mRNA translation and enhanced protein synthesis to sustain growth of malignant cells.</text>
</comment>
<comment type="miscellaneous">
    <text evidence="4">Present in the circulating blood plasma of cancer patients, particularly in ovarian and non-small cell lung cancer patients, may potentially be used as a biomarker (PubMed:27659353).</text>
</comment>
<comment type="similarity">
    <text evidence="15">Belongs to the methyltransferase superfamily.</text>
</comment>
<comment type="caution">
    <text evidence="16">Was thought to negatively regulate cell proliferation at G1/S transition via transcriptional suppression of cell cycle regulatory genes. However this publication has been retracted due to unexplained image anomalies.</text>
</comment>
<comment type="sequence caution" evidence="15">
    <conflict type="erroneous initiation">
        <sequence resource="EMBL-CDS" id="BAA74882"/>
    </conflict>
    <text>Extended N-terminus.</text>
</comment>
<comment type="sequence caution" evidence="15">
    <conflict type="erroneous initiation">
        <sequence resource="EMBL-CDS" id="BAD97213"/>
    </conflict>
    <text>Extended N-terminus.</text>
</comment>
<dbReference type="EC" id="2.1.1.-" evidence="6 7"/>
<dbReference type="EMBL" id="AL049669">
    <property type="protein sequence ID" value="CAB41243.1"/>
    <property type="molecule type" value="mRNA"/>
</dbReference>
<dbReference type="EMBL" id="AB020666">
    <property type="protein sequence ID" value="BAA74882.2"/>
    <property type="status" value="ALT_INIT"/>
    <property type="molecule type" value="mRNA"/>
</dbReference>
<dbReference type="EMBL" id="AF132936">
    <property type="protein sequence ID" value="AAD27711.1"/>
    <property type="molecule type" value="mRNA"/>
</dbReference>
<dbReference type="EMBL" id="AK027621">
    <property type="protein sequence ID" value="BAB55240.1"/>
    <property type="molecule type" value="mRNA"/>
</dbReference>
<dbReference type="EMBL" id="AK074552">
    <property type="protein sequence ID" value="BAC11055.1"/>
    <property type="molecule type" value="mRNA"/>
</dbReference>
<dbReference type="EMBL" id="AK291740">
    <property type="protein sequence ID" value="BAF84429.1"/>
    <property type="molecule type" value="mRNA"/>
</dbReference>
<dbReference type="EMBL" id="AK223493">
    <property type="protein sequence ID" value="BAD97213.1"/>
    <property type="status" value="ALT_INIT"/>
    <property type="molecule type" value="mRNA"/>
</dbReference>
<dbReference type="EMBL" id="AL031864">
    <property type="status" value="NOT_ANNOTATED_CDS"/>
    <property type="molecule type" value="Genomic_DNA"/>
</dbReference>
<dbReference type="EMBL" id="BC006814">
    <property type="protein sequence ID" value="AAH06814.1"/>
    <property type="molecule type" value="mRNA"/>
</dbReference>
<dbReference type="EMBL" id="BC029083">
    <property type="protein sequence ID" value="AAH29083.1"/>
    <property type="molecule type" value="mRNA"/>
</dbReference>
<dbReference type="CCDS" id="CCDS1299.1">
    <molecule id="Q8N6R0-5"/>
</dbReference>
<dbReference type="CCDS" id="CCDS1300.1">
    <molecule id="Q8N6R0-3"/>
</dbReference>
<dbReference type="CCDS" id="CCDS30936.1">
    <molecule id="Q8N6R0-1"/>
</dbReference>
<dbReference type="RefSeq" id="NP_001007240.1">
    <molecule id="Q8N6R0-1"/>
    <property type="nucleotide sequence ID" value="NM_001007239.2"/>
</dbReference>
<dbReference type="RefSeq" id="NP_055770.1">
    <molecule id="Q8N6R0-3"/>
    <property type="nucleotide sequence ID" value="NM_014955.3"/>
</dbReference>
<dbReference type="RefSeq" id="NP_057019.3">
    <molecule id="Q8N6R0-5"/>
    <property type="nucleotide sequence ID" value="NM_015935.4"/>
</dbReference>
<dbReference type="PDB" id="5WCJ">
    <property type="method" value="X-ray"/>
    <property type="resolution" value="1.70 A"/>
    <property type="chains" value="A=470-699"/>
</dbReference>
<dbReference type="PDBsum" id="5WCJ"/>
<dbReference type="SMR" id="Q8N6R0"/>
<dbReference type="BioGRID" id="119632">
    <property type="interactions" value="92"/>
</dbReference>
<dbReference type="FunCoup" id="Q8N6R0">
    <property type="interactions" value="4854"/>
</dbReference>
<dbReference type="IntAct" id="Q8N6R0">
    <property type="interactions" value="44"/>
</dbReference>
<dbReference type="MINT" id="Q8N6R0"/>
<dbReference type="STRING" id="9606.ENSP00000354920"/>
<dbReference type="GlyCosmos" id="Q8N6R0">
    <property type="glycosylation" value="1 site, 2 glycans"/>
</dbReference>
<dbReference type="GlyGen" id="Q8N6R0">
    <property type="glycosylation" value="1 site, 2 O-linked glycans (1 site)"/>
</dbReference>
<dbReference type="iPTMnet" id="Q8N6R0"/>
<dbReference type="PhosphoSitePlus" id="Q8N6R0"/>
<dbReference type="BioMuta" id="METTL13"/>
<dbReference type="DMDM" id="67461056"/>
<dbReference type="jPOST" id="Q8N6R0"/>
<dbReference type="MassIVE" id="Q8N6R0"/>
<dbReference type="PaxDb" id="9606-ENSP00000354920"/>
<dbReference type="PeptideAtlas" id="Q8N6R0"/>
<dbReference type="ProteomicsDB" id="72216">
    <molecule id="Q8N6R0-5"/>
</dbReference>
<dbReference type="ProteomicsDB" id="72217">
    <molecule id="Q8N6R0-1"/>
</dbReference>
<dbReference type="ProteomicsDB" id="72218">
    <molecule id="Q8N6R0-2"/>
</dbReference>
<dbReference type="ProteomicsDB" id="72219">
    <molecule id="Q8N6R0-3"/>
</dbReference>
<dbReference type="ProteomicsDB" id="72220">
    <molecule id="Q8N6R0-4"/>
</dbReference>
<dbReference type="Pumba" id="Q8N6R0"/>
<dbReference type="Antibodypedia" id="20555">
    <property type="antibodies" value="80 antibodies from 18 providers"/>
</dbReference>
<dbReference type="DNASU" id="51603"/>
<dbReference type="Ensembl" id="ENST00000361735.4">
    <molecule id="Q8N6R0-5"/>
    <property type="protein sequence ID" value="ENSP00000354920.3"/>
    <property type="gene ID" value="ENSG00000010165.20"/>
</dbReference>
<dbReference type="Ensembl" id="ENST00000362019.7">
    <molecule id="Q8N6R0-3"/>
    <property type="protein sequence ID" value="ENSP00000355393.3"/>
    <property type="gene ID" value="ENSG00000010165.20"/>
</dbReference>
<dbReference type="Ensembl" id="ENST00000367737.9">
    <molecule id="Q8N6R0-1"/>
    <property type="protein sequence ID" value="ENSP00000356711.5"/>
    <property type="gene ID" value="ENSG00000010165.20"/>
</dbReference>
<dbReference type="GeneID" id="51603"/>
<dbReference type="KEGG" id="hsa:51603"/>
<dbReference type="MANE-Select" id="ENST00000361735.4">
    <property type="protein sequence ID" value="ENSP00000354920.3"/>
    <property type="RefSeq nucleotide sequence ID" value="NM_015935.5"/>
    <property type="RefSeq protein sequence ID" value="NP_057019.3"/>
</dbReference>
<dbReference type="UCSC" id="uc001ghz.4">
    <molecule id="Q8N6R0-5"/>
    <property type="organism name" value="human"/>
</dbReference>
<dbReference type="AGR" id="HGNC:24248"/>
<dbReference type="CTD" id="51603"/>
<dbReference type="DisGeNET" id="51603"/>
<dbReference type="GeneCards" id="METTL13"/>
<dbReference type="HGNC" id="HGNC:24248">
    <property type="gene designation" value="METTL13"/>
</dbReference>
<dbReference type="HPA" id="ENSG00000010165">
    <property type="expression patterns" value="Low tissue specificity"/>
</dbReference>
<dbReference type="MalaCards" id="METTL13"/>
<dbReference type="MIM" id="605429">
    <property type="type" value="phenotype"/>
</dbReference>
<dbReference type="MIM" id="617987">
    <property type="type" value="gene"/>
</dbReference>
<dbReference type="neXtProt" id="NX_Q8N6R0"/>
<dbReference type="OpenTargets" id="ENSG00000010165"/>
<dbReference type="VEuPathDB" id="HostDB:ENSG00000010165"/>
<dbReference type="eggNOG" id="KOG2352">
    <property type="taxonomic scope" value="Eukaryota"/>
</dbReference>
<dbReference type="GeneTree" id="ENSGT00510000047399"/>
<dbReference type="HOGENOM" id="CLU_010025_1_0_1"/>
<dbReference type="InParanoid" id="Q8N6R0"/>
<dbReference type="OMA" id="FEWYGAF"/>
<dbReference type="OrthoDB" id="6251at9604"/>
<dbReference type="PAN-GO" id="Q8N6R0">
    <property type="GO annotations" value="0 GO annotations based on evolutionary models"/>
</dbReference>
<dbReference type="PhylomeDB" id="Q8N6R0"/>
<dbReference type="TreeFam" id="TF105906"/>
<dbReference type="BRENDA" id="2.1.1.244">
    <property type="organism ID" value="2681"/>
</dbReference>
<dbReference type="PathwayCommons" id="Q8N6R0"/>
<dbReference type="SignaLink" id="Q8N6R0"/>
<dbReference type="BioGRID-ORCS" id="51603">
    <property type="hits" value="6 hits in 1150 CRISPR screens"/>
</dbReference>
<dbReference type="ChiTaRS" id="METTL13">
    <property type="organism name" value="human"/>
</dbReference>
<dbReference type="GeneWiki" id="KIAA0859"/>
<dbReference type="GenomeRNAi" id="51603"/>
<dbReference type="Pharos" id="Q8N6R0">
    <property type="development level" value="Tbio"/>
</dbReference>
<dbReference type="PRO" id="PR:Q8N6R0"/>
<dbReference type="Proteomes" id="UP000005640">
    <property type="component" value="Chromosome 1"/>
</dbReference>
<dbReference type="RNAct" id="Q8N6R0">
    <property type="molecule type" value="protein"/>
</dbReference>
<dbReference type="Bgee" id="ENSG00000010165">
    <property type="expression patterns" value="Expressed in mucosa of transverse colon and 198 other cell types or tissues"/>
</dbReference>
<dbReference type="ExpressionAtlas" id="Q8N6R0">
    <property type="expression patterns" value="baseline and differential"/>
</dbReference>
<dbReference type="GO" id="GO:0005737">
    <property type="term" value="C:cytoplasm"/>
    <property type="evidence" value="ECO:0000250"/>
    <property type="project" value="UniProtKB"/>
</dbReference>
<dbReference type="GO" id="GO:0005829">
    <property type="term" value="C:cytosol"/>
    <property type="evidence" value="ECO:0000314"/>
    <property type="project" value="HPA"/>
</dbReference>
<dbReference type="GO" id="GO:0005739">
    <property type="term" value="C:mitochondrion"/>
    <property type="evidence" value="ECO:0000250"/>
    <property type="project" value="UniProtKB"/>
</dbReference>
<dbReference type="GO" id="GO:0005634">
    <property type="term" value="C:nucleus"/>
    <property type="evidence" value="ECO:0000250"/>
    <property type="project" value="UniProtKB"/>
</dbReference>
<dbReference type="GO" id="GO:0016279">
    <property type="term" value="F:protein-lysine N-methyltransferase activity"/>
    <property type="evidence" value="ECO:0000314"/>
    <property type="project" value="FlyBase"/>
</dbReference>
<dbReference type="GO" id="GO:0032259">
    <property type="term" value="P:methylation"/>
    <property type="evidence" value="ECO:0007669"/>
    <property type="project" value="UniProtKB-KW"/>
</dbReference>
<dbReference type="CDD" id="cd02440">
    <property type="entry name" value="AdoMet_MTases"/>
    <property type="match status" value="2"/>
</dbReference>
<dbReference type="FunFam" id="3.40.50.150:FF:000110">
    <property type="entry name" value="methyltransferase-like protein 13 isoform X1"/>
    <property type="match status" value="1"/>
</dbReference>
<dbReference type="FunFam" id="3.40.50.150:FF:000150">
    <property type="entry name" value="methyltransferase-like protein 13 isoform X1"/>
    <property type="match status" value="1"/>
</dbReference>
<dbReference type="Gene3D" id="3.40.50.150">
    <property type="entry name" value="Vaccinia Virus protein VP39"/>
    <property type="match status" value="2"/>
</dbReference>
<dbReference type="InterPro" id="IPR051419">
    <property type="entry name" value="Lys/N-term_MeTrsfase_sf"/>
</dbReference>
<dbReference type="InterPro" id="IPR041698">
    <property type="entry name" value="Methyltransf_25"/>
</dbReference>
<dbReference type="InterPro" id="IPR029063">
    <property type="entry name" value="SAM-dependent_MTases_sf"/>
</dbReference>
<dbReference type="NCBIfam" id="NF037959">
    <property type="entry name" value="MFS_SpdSyn"/>
    <property type="match status" value="1"/>
</dbReference>
<dbReference type="PANTHER" id="PTHR12176">
    <property type="entry name" value="SAM-DEPENDENT METHYLTRANSFERASE SUPERFAMILY PROTEIN"/>
    <property type="match status" value="1"/>
</dbReference>
<dbReference type="Pfam" id="PF13649">
    <property type="entry name" value="Methyltransf_25"/>
    <property type="match status" value="1"/>
</dbReference>
<dbReference type="Pfam" id="PF01564">
    <property type="entry name" value="Spermine_synth"/>
    <property type="match status" value="1"/>
</dbReference>
<dbReference type="SUPFAM" id="SSF53335">
    <property type="entry name" value="S-adenosyl-L-methionine-dependent methyltransferases"/>
    <property type="match status" value="2"/>
</dbReference>
<accession>Q8N6R0</accession>
<accession>A6NFK0</accession>
<accession>A8K6S5</accession>
<accession>O94940</accession>
<accession>Q53EZ6</accession>
<accession>Q5TGP9</accession>
<accession>Q5TGQ0</accession>
<accession>Q8N2P8</accession>
<accession>Q96J11</accession>
<accession>Q96SQ0</accession>
<accession>Q9Y2Z1</accession>
<accession>Q9Y3M6</accession>
<reference key="1">
    <citation type="submission" date="1999-04" db="EMBL/GenBank/DDBJ databases">
        <authorList>
            <person name="Rhodes S."/>
        </authorList>
    </citation>
    <scope>NUCLEOTIDE SEQUENCE [LARGE SCALE MRNA] (ISOFORM 4)</scope>
</reference>
<reference key="2">
    <citation type="journal article" date="1998" name="DNA Res.">
        <title>Prediction of the coding sequences of unidentified human genes. XII. The complete sequences of 100 new cDNA clones from brain which code for large proteins in vitro.</title>
        <authorList>
            <person name="Nagase T."/>
            <person name="Ishikawa K."/>
            <person name="Suyama M."/>
            <person name="Kikuno R."/>
            <person name="Hirosawa M."/>
            <person name="Miyajima N."/>
            <person name="Tanaka A."/>
            <person name="Kotani H."/>
            <person name="Nomura N."/>
            <person name="Ohara O."/>
        </authorList>
    </citation>
    <scope>NUCLEOTIDE SEQUENCE [LARGE SCALE MRNA] (ISOFORM 1)</scope>
    <source>
        <tissue>Brain</tissue>
    </source>
</reference>
<reference key="3">
    <citation type="journal article" date="2002" name="DNA Res.">
        <title>Construction of expression-ready cDNA clones for KIAA genes: manual curation of 330 KIAA cDNA clones.</title>
        <authorList>
            <person name="Nakajima D."/>
            <person name="Okazaki N."/>
            <person name="Yamakawa H."/>
            <person name="Kikuno R."/>
            <person name="Ohara O."/>
            <person name="Nagase T."/>
        </authorList>
    </citation>
    <scope>SEQUENCE REVISION</scope>
</reference>
<reference key="4">
    <citation type="journal article" date="2000" name="Genome Res.">
        <title>Identification of novel human genes evolutionarily conserved in Caenorhabditis elegans by comparative proteomics.</title>
        <authorList>
            <person name="Lai C.-H."/>
            <person name="Chou C.-Y."/>
            <person name="Ch'ang L.-Y."/>
            <person name="Liu C.-S."/>
            <person name="Lin W.-C."/>
        </authorList>
    </citation>
    <scope>NUCLEOTIDE SEQUENCE [LARGE SCALE MRNA] (ISOFORM 2)</scope>
</reference>
<reference key="5">
    <citation type="journal article" date="2004" name="Nat. Genet.">
        <title>Complete sequencing and characterization of 21,243 full-length human cDNAs.</title>
        <authorList>
            <person name="Ota T."/>
            <person name="Suzuki Y."/>
            <person name="Nishikawa T."/>
            <person name="Otsuki T."/>
            <person name="Sugiyama T."/>
            <person name="Irie R."/>
            <person name="Wakamatsu A."/>
            <person name="Hayashi K."/>
            <person name="Sato H."/>
            <person name="Nagai K."/>
            <person name="Kimura K."/>
            <person name="Makita H."/>
            <person name="Sekine M."/>
            <person name="Obayashi M."/>
            <person name="Nishi T."/>
            <person name="Shibahara T."/>
            <person name="Tanaka T."/>
            <person name="Ishii S."/>
            <person name="Yamamoto J."/>
            <person name="Saito K."/>
            <person name="Kawai Y."/>
            <person name="Isono Y."/>
            <person name="Nakamura Y."/>
            <person name="Nagahari K."/>
            <person name="Murakami K."/>
            <person name="Yasuda T."/>
            <person name="Iwayanagi T."/>
            <person name="Wagatsuma M."/>
            <person name="Shiratori A."/>
            <person name="Sudo H."/>
            <person name="Hosoiri T."/>
            <person name="Kaku Y."/>
            <person name="Kodaira H."/>
            <person name="Kondo H."/>
            <person name="Sugawara M."/>
            <person name="Takahashi M."/>
            <person name="Kanda K."/>
            <person name="Yokoi T."/>
            <person name="Furuya T."/>
            <person name="Kikkawa E."/>
            <person name="Omura Y."/>
            <person name="Abe K."/>
            <person name="Kamihara K."/>
            <person name="Katsuta N."/>
            <person name="Sato K."/>
            <person name="Tanikawa M."/>
            <person name="Yamazaki M."/>
            <person name="Ninomiya K."/>
            <person name="Ishibashi T."/>
            <person name="Yamashita H."/>
            <person name="Murakawa K."/>
            <person name="Fujimori K."/>
            <person name="Tanai H."/>
            <person name="Kimata M."/>
            <person name="Watanabe M."/>
            <person name="Hiraoka S."/>
            <person name="Chiba Y."/>
            <person name="Ishida S."/>
            <person name="Ono Y."/>
            <person name="Takiguchi S."/>
            <person name="Watanabe S."/>
            <person name="Yosida M."/>
            <person name="Hotuta T."/>
            <person name="Kusano J."/>
            <person name="Kanehori K."/>
            <person name="Takahashi-Fujii A."/>
            <person name="Hara H."/>
            <person name="Tanase T.-O."/>
            <person name="Nomura Y."/>
            <person name="Togiya S."/>
            <person name="Komai F."/>
            <person name="Hara R."/>
            <person name="Takeuchi K."/>
            <person name="Arita M."/>
            <person name="Imose N."/>
            <person name="Musashino K."/>
            <person name="Yuuki H."/>
            <person name="Oshima A."/>
            <person name="Sasaki N."/>
            <person name="Aotsuka S."/>
            <person name="Yoshikawa Y."/>
            <person name="Matsunawa H."/>
            <person name="Ichihara T."/>
            <person name="Shiohata N."/>
            <person name="Sano S."/>
            <person name="Moriya S."/>
            <person name="Momiyama H."/>
            <person name="Satoh N."/>
            <person name="Takami S."/>
            <person name="Terashima Y."/>
            <person name="Suzuki O."/>
            <person name="Nakagawa S."/>
            <person name="Senoh A."/>
            <person name="Mizoguchi H."/>
            <person name="Goto Y."/>
            <person name="Shimizu F."/>
            <person name="Wakebe H."/>
            <person name="Hishigaki H."/>
            <person name="Watanabe T."/>
            <person name="Sugiyama A."/>
            <person name="Takemoto M."/>
            <person name="Kawakami B."/>
            <person name="Yamazaki M."/>
            <person name="Watanabe K."/>
            <person name="Kumagai A."/>
            <person name="Itakura S."/>
            <person name="Fukuzumi Y."/>
            <person name="Fujimori Y."/>
            <person name="Komiyama M."/>
            <person name="Tashiro H."/>
            <person name="Tanigami A."/>
            <person name="Fujiwara T."/>
            <person name="Ono T."/>
            <person name="Yamada K."/>
            <person name="Fujii Y."/>
            <person name="Ozaki K."/>
            <person name="Hirao M."/>
            <person name="Ohmori Y."/>
            <person name="Kawabata A."/>
            <person name="Hikiji T."/>
            <person name="Kobatake N."/>
            <person name="Inagaki H."/>
            <person name="Ikema Y."/>
            <person name="Okamoto S."/>
            <person name="Okitani R."/>
            <person name="Kawakami T."/>
            <person name="Noguchi S."/>
            <person name="Itoh T."/>
            <person name="Shigeta K."/>
            <person name="Senba T."/>
            <person name="Matsumura K."/>
            <person name="Nakajima Y."/>
            <person name="Mizuno T."/>
            <person name="Morinaga M."/>
            <person name="Sasaki M."/>
            <person name="Togashi T."/>
            <person name="Oyama M."/>
            <person name="Hata H."/>
            <person name="Watanabe M."/>
            <person name="Komatsu T."/>
            <person name="Mizushima-Sugano J."/>
            <person name="Satoh T."/>
            <person name="Shirai Y."/>
            <person name="Takahashi Y."/>
            <person name="Nakagawa K."/>
            <person name="Okumura K."/>
            <person name="Nagase T."/>
            <person name="Nomura N."/>
            <person name="Kikuchi H."/>
            <person name="Masuho Y."/>
            <person name="Yamashita R."/>
            <person name="Nakai K."/>
            <person name="Yada T."/>
            <person name="Nakamura Y."/>
            <person name="Ohara O."/>
            <person name="Isogai T."/>
            <person name="Sugano S."/>
        </authorList>
    </citation>
    <scope>NUCLEOTIDE SEQUENCE [LARGE SCALE MRNA] (ISOFORMS 1; 3 AND 5)</scope>
    <scope>VARIANT VAL-105</scope>
    <source>
        <tissue>Embryo</tissue>
        <tissue>Placenta</tissue>
        <tissue>Teratocarcinoma</tissue>
    </source>
</reference>
<reference key="6">
    <citation type="submission" date="2005-04" db="EMBL/GenBank/DDBJ databases">
        <authorList>
            <person name="Totoki Y."/>
            <person name="Toyoda A."/>
            <person name="Takeda T."/>
            <person name="Sakaki Y."/>
            <person name="Tanaka A."/>
            <person name="Yokoyama S."/>
        </authorList>
    </citation>
    <scope>NUCLEOTIDE SEQUENCE [LARGE SCALE MRNA] (ISOFORM 1)</scope>
</reference>
<reference key="7">
    <citation type="journal article" date="2006" name="Nature">
        <title>The DNA sequence and biological annotation of human chromosome 1.</title>
        <authorList>
            <person name="Gregory S.G."/>
            <person name="Barlow K.F."/>
            <person name="McLay K.E."/>
            <person name="Kaul R."/>
            <person name="Swarbreck D."/>
            <person name="Dunham A."/>
            <person name="Scott C.E."/>
            <person name="Howe K.L."/>
            <person name="Woodfine K."/>
            <person name="Spencer C.C.A."/>
            <person name="Jones M.C."/>
            <person name="Gillson C."/>
            <person name="Searle S."/>
            <person name="Zhou Y."/>
            <person name="Kokocinski F."/>
            <person name="McDonald L."/>
            <person name="Evans R."/>
            <person name="Phillips K."/>
            <person name="Atkinson A."/>
            <person name="Cooper R."/>
            <person name="Jones C."/>
            <person name="Hall R.E."/>
            <person name="Andrews T.D."/>
            <person name="Lloyd C."/>
            <person name="Ainscough R."/>
            <person name="Almeida J.P."/>
            <person name="Ambrose K.D."/>
            <person name="Anderson F."/>
            <person name="Andrew R.W."/>
            <person name="Ashwell R.I.S."/>
            <person name="Aubin K."/>
            <person name="Babbage A.K."/>
            <person name="Bagguley C.L."/>
            <person name="Bailey J."/>
            <person name="Beasley H."/>
            <person name="Bethel G."/>
            <person name="Bird C.P."/>
            <person name="Bray-Allen S."/>
            <person name="Brown J.Y."/>
            <person name="Brown A.J."/>
            <person name="Buckley D."/>
            <person name="Burton J."/>
            <person name="Bye J."/>
            <person name="Carder C."/>
            <person name="Chapman J.C."/>
            <person name="Clark S.Y."/>
            <person name="Clarke G."/>
            <person name="Clee C."/>
            <person name="Cobley V."/>
            <person name="Collier R.E."/>
            <person name="Corby N."/>
            <person name="Coville G.J."/>
            <person name="Davies J."/>
            <person name="Deadman R."/>
            <person name="Dunn M."/>
            <person name="Earthrowl M."/>
            <person name="Ellington A.G."/>
            <person name="Errington H."/>
            <person name="Frankish A."/>
            <person name="Frankland J."/>
            <person name="French L."/>
            <person name="Garner P."/>
            <person name="Garnett J."/>
            <person name="Gay L."/>
            <person name="Ghori M.R.J."/>
            <person name="Gibson R."/>
            <person name="Gilby L.M."/>
            <person name="Gillett W."/>
            <person name="Glithero R.J."/>
            <person name="Grafham D.V."/>
            <person name="Griffiths C."/>
            <person name="Griffiths-Jones S."/>
            <person name="Grocock R."/>
            <person name="Hammond S."/>
            <person name="Harrison E.S.I."/>
            <person name="Hart E."/>
            <person name="Haugen E."/>
            <person name="Heath P.D."/>
            <person name="Holmes S."/>
            <person name="Holt K."/>
            <person name="Howden P.J."/>
            <person name="Hunt A.R."/>
            <person name="Hunt S.E."/>
            <person name="Hunter G."/>
            <person name="Isherwood J."/>
            <person name="James R."/>
            <person name="Johnson C."/>
            <person name="Johnson D."/>
            <person name="Joy A."/>
            <person name="Kay M."/>
            <person name="Kershaw J.K."/>
            <person name="Kibukawa M."/>
            <person name="Kimberley A.M."/>
            <person name="King A."/>
            <person name="Knights A.J."/>
            <person name="Lad H."/>
            <person name="Laird G."/>
            <person name="Lawlor S."/>
            <person name="Leongamornlert D.A."/>
            <person name="Lloyd D.M."/>
            <person name="Loveland J."/>
            <person name="Lovell J."/>
            <person name="Lush M.J."/>
            <person name="Lyne R."/>
            <person name="Martin S."/>
            <person name="Mashreghi-Mohammadi M."/>
            <person name="Matthews L."/>
            <person name="Matthews N.S.W."/>
            <person name="McLaren S."/>
            <person name="Milne S."/>
            <person name="Mistry S."/>
            <person name="Moore M.J.F."/>
            <person name="Nickerson T."/>
            <person name="O'Dell C.N."/>
            <person name="Oliver K."/>
            <person name="Palmeiri A."/>
            <person name="Palmer S.A."/>
            <person name="Parker A."/>
            <person name="Patel D."/>
            <person name="Pearce A.V."/>
            <person name="Peck A.I."/>
            <person name="Pelan S."/>
            <person name="Phelps K."/>
            <person name="Phillimore B.J."/>
            <person name="Plumb R."/>
            <person name="Rajan J."/>
            <person name="Raymond C."/>
            <person name="Rouse G."/>
            <person name="Saenphimmachak C."/>
            <person name="Sehra H.K."/>
            <person name="Sheridan E."/>
            <person name="Shownkeen R."/>
            <person name="Sims S."/>
            <person name="Skuce C.D."/>
            <person name="Smith M."/>
            <person name="Steward C."/>
            <person name="Subramanian S."/>
            <person name="Sycamore N."/>
            <person name="Tracey A."/>
            <person name="Tromans A."/>
            <person name="Van Helmond Z."/>
            <person name="Wall M."/>
            <person name="Wallis J.M."/>
            <person name="White S."/>
            <person name="Whitehead S.L."/>
            <person name="Wilkinson J.E."/>
            <person name="Willey D.L."/>
            <person name="Williams H."/>
            <person name="Wilming L."/>
            <person name="Wray P.W."/>
            <person name="Wu Z."/>
            <person name="Coulson A."/>
            <person name="Vaudin M."/>
            <person name="Sulston J.E."/>
            <person name="Durbin R.M."/>
            <person name="Hubbard T."/>
            <person name="Wooster R."/>
            <person name="Dunham I."/>
            <person name="Carter N.P."/>
            <person name="McVean G."/>
            <person name="Ross M.T."/>
            <person name="Harrow J."/>
            <person name="Olson M.V."/>
            <person name="Beck S."/>
            <person name="Rogers J."/>
            <person name="Bentley D.R."/>
        </authorList>
    </citation>
    <scope>NUCLEOTIDE SEQUENCE [LARGE SCALE GENOMIC DNA]</scope>
</reference>
<reference key="8">
    <citation type="journal article" date="2004" name="Genome Res.">
        <title>The status, quality, and expansion of the NIH full-length cDNA project: the Mammalian Gene Collection (MGC).</title>
        <authorList>
            <consortium name="The MGC Project Team"/>
        </authorList>
    </citation>
    <scope>NUCLEOTIDE SEQUENCE [LARGE SCALE MRNA] (ISOFORM 1)</scope>
    <source>
        <tissue>Placenta</tissue>
        <tissue>Testis</tissue>
    </source>
</reference>
<reference key="9">
    <citation type="journal article" date="2008" name="Proc. Natl. Acad. Sci. U.S.A.">
        <title>A quantitative atlas of mitotic phosphorylation.</title>
        <authorList>
            <person name="Dephoure N."/>
            <person name="Zhou C."/>
            <person name="Villen J."/>
            <person name="Beausoleil S.A."/>
            <person name="Bakalarski C.E."/>
            <person name="Elledge S.J."/>
            <person name="Gygi S.P."/>
        </authorList>
    </citation>
    <scope>PHOSPHORYLATION [LARGE SCALE ANALYSIS] AT SER-267</scope>
    <scope>IDENTIFICATION BY MASS SPECTROMETRY [LARGE SCALE ANALYSIS]</scope>
    <source>
        <tissue>Cervix carcinoma</tissue>
    </source>
</reference>
<reference key="10">
    <citation type="journal article" date="2011" name="BMC Syst. Biol.">
        <title>Initial characterization of the human central proteome.</title>
        <authorList>
            <person name="Burkard T.R."/>
            <person name="Planyavsky M."/>
            <person name="Kaupe I."/>
            <person name="Breitwieser F.P."/>
            <person name="Buerckstuemmer T."/>
            <person name="Bennett K.L."/>
            <person name="Superti-Furga G."/>
            <person name="Colinge J."/>
        </authorList>
    </citation>
    <scope>IDENTIFICATION BY MASS SPECTROMETRY [LARGE SCALE ANALYSIS]</scope>
</reference>
<reference key="11">
    <citation type="journal article" date="2012" name="Proc. Natl. Acad. Sci. U.S.A.">
        <title>N-terminal acetylome analyses and functional insights of the N-terminal acetyltransferase NatB.</title>
        <authorList>
            <person name="Van Damme P."/>
            <person name="Lasa M."/>
            <person name="Polevoda B."/>
            <person name="Gazquez C."/>
            <person name="Elosegui-Artola A."/>
            <person name="Kim D.S."/>
            <person name="De Juan-Pardo E."/>
            <person name="Demeyer K."/>
            <person name="Hole K."/>
            <person name="Larrea E."/>
            <person name="Timmerman E."/>
            <person name="Prieto J."/>
            <person name="Arnesen T."/>
            <person name="Sherman F."/>
            <person name="Gevaert K."/>
            <person name="Aldabe R."/>
        </authorList>
    </citation>
    <scope>ACETYLATION [LARGE SCALE ANALYSIS] AT MET-1</scope>
    <scope>IDENTIFICATION BY MASS SPECTROMETRY [LARGE SCALE ANALYSIS]</scope>
</reference>
<reference key="12">
    <citation type="journal article" date="2013" name="J. Proteome Res.">
        <title>Toward a comprehensive characterization of a human cancer cell phosphoproteome.</title>
        <authorList>
            <person name="Zhou H."/>
            <person name="Di Palma S."/>
            <person name="Preisinger C."/>
            <person name="Peng M."/>
            <person name="Polat A.N."/>
            <person name="Heck A.J."/>
            <person name="Mohammed S."/>
        </authorList>
    </citation>
    <scope>PHOSPHORYLATION [LARGE SCALE ANALYSIS] AT SER-267</scope>
    <scope>IDENTIFICATION BY MASS SPECTROMETRY [LARGE SCALE ANALYSIS]</scope>
    <source>
        <tissue>Erythroleukemia</tissue>
    </source>
</reference>
<reference key="13">
    <citation type="journal article" date="2014" name="J. Proteomics">
        <title>An enzyme assisted RP-RPLC approach for in-depth analysis of human liver phosphoproteome.</title>
        <authorList>
            <person name="Bian Y."/>
            <person name="Song C."/>
            <person name="Cheng K."/>
            <person name="Dong M."/>
            <person name="Wang F."/>
            <person name="Huang J."/>
            <person name="Sun D."/>
            <person name="Wang L."/>
            <person name="Ye M."/>
            <person name="Zou H."/>
        </authorList>
    </citation>
    <scope>IDENTIFICATION BY MASS SPECTROMETRY [LARGE SCALE ANALYSIS]</scope>
    <source>
        <tissue>Liver</tissue>
    </source>
</reference>
<reference key="14">
    <citation type="journal article" date="2016" name="J. Transl. Med.">
        <title>Immunogenic FEAT protein circulates in the bloodstream of cancer patients.</title>
        <authorList>
            <person name="Li Y."/>
            <person name="Kobayashi K."/>
            <person name="Mona M.M."/>
            <person name="Satomi C."/>
            <person name="Okano S."/>
            <person name="Inoue H."/>
            <person name="Tani K."/>
            <person name="Takahashi A."/>
        </authorList>
    </citation>
    <scope>SUBCELLULAR LOCATION</scope>
</reference>
<reference key="15">
    <citation type="journal article" date="2016" name="Sci. Rep.">
        <title>METTL13 is downregulated in bladder carcinoma and suppresses cell proliferation, migration and invasion.</title>
        <authorList>
            <person name="Zhang Z."/>
            <person name="Zhang G."/>
            <person name="Kong C."/>
            <person name="Zhan B."/>
            <person name="Dong X."/>
            <person name="Man X."/>
        </authorList>
    </citation>
    <scope>RETRACTED PAPER</scope>
</reference>
<reference key="16">
    <citation type="journal article" date="2023" name="Sci. Rep.">
        <authorList>
            <person name="Zhang Z."/>
            <person name="Zhang G."/>
            <person name="Kong C."/>
            <person name="Zhan B."/>
            <person name="Dong X."/>
            <person name="Man X."/>
        </authorList>
    </citation>
    <scope>RETRACTION NOTICE OF PUBMED:26763933</scope>
</reference>
<reference key="17">
    <citation type="journal article" date="2018" name="J. Clin. Invest.">
        <title>Modifier variant of METTL13 suppresses human GAB1-associated profound deafness.</title>
        <authorList>
            <person name="Yousaf R."/>
            <person name="Ahmed Z.M."/>
            <person name="Giese A.P."/>
            <person name="Morell R.J."/>
            <person name="Lagziel A."/>
            <person name="Dabdoub A."/>
            <person name="Wilcox E.R."/>
            <person name="Riazuddin S."/>
            <person name="Friedman T.B."/>
            <person name="Riazuddin S."/>
        </authorList>
    </citation>
    <scope>INTERACTION WITH GAB1 AND SPRY2</scope>
    <scope>POLYMORPHISM</scope>
    <scope>VARIANT GLN-544</scope>
</reference>
<reference key="18">
    <citation type="journal article" date="2018" name="Cell">
        <title>METTL13 methylation of eEF1A increases translational output to promote tumorigenesis.</title>
        <authorList>
            <person name="Liu S."/>
            <person name="Hausmann S."/>
            <person name="Carlson S.M."/>
            <person name="Fuentes M.E."/>
            <person name="Francis J.W."/>
            <person name="Pillai R."/>
            <person name="Lofgren S.M."/>
            <person name="Hulea L."/>
            <person name="Tandoc K."/>
            <person name="Lu J."/>
            <person name="Li A."/>
            <person name="Nguyen N.D."/>
            <person name="Caporicci M."/>
            <person name="Kim M.P."/>
            <person name="Maitra A."/>
            <person name="Wang H."/>
            <person name="Wistuba I.I."/>
            <person name="Porco J.A. Jr."/>
            <person name="Bassik M.C."/>
            <person name="Elias J.E."/>
            <person name="Song J."/>
            <person name="Topisirovic I."/>
            <person name="Van Rechem C."/>
            <person name="Mazur P.K."/>
            <person name="Gozani O."/>
        </authorList>
    </citation>
    <scope>FUNCTION</scope>
    <scope>CATALYTIC ACTIVITY</scope>
    <scope>INVOLVEMENT IN TUMORIGENESIS</scope>
    <scope>MUTAGENESIS OF VAL-54; GLY-58; ASN-59; TYR-67; TYR-71; ASN-76; PHE-115; 120-ASP-LYS-121 AND TYR-156</scope>
</reference>
<reference key="19">
    <citation type="journal article" date="2018" name="Nat. Commun.">
        <title>The dual methyltransferase METTL13 targets N terminus and Lys55 of eEF1A and modulates codon-specific translation rates.</title>
        <authorList>
            <person name="Jakobsson M.E."/>
            <person name="Malecki J.M."/>
            <person name="Halabelian L."/>
            <person name="Nilges B.S."/>
            <person name="Pinto R."/>
            <person name="Kudithipudi S."/>
            <person name="Munk S."/>
            <person name="Davydova E."/>
            <person name="Zuhairi F.R."/>
            <person name="Arrowsmith C.H."/>
            <person name="Jeltsch A."/>
            <person name="Leidel S.A."/>
            <person name="Olsen J.V."/>
            <person name="Falnes P.O."/>
        </authorList>
    </citation>
    <scope>X-RAY CRYSTALLOGRAPHY (1.70 ANGSTROMS) OF 470-699</scope>
    <scope>FUNCTION</scope>
    <scope>CATALYTIC ACTIVITY</scope>
    <scope>ACTIVITY REGULATION</scope>
    <scope>MUTAGENESIS OF GLU-524; ASP-551; ASP-575; VAL-576; ASP-577; SER-578 AND ASN-647</scope>
</reference>
<reference key="20">
    <citation type="journal article" date="2011" name="Nature">
        <title>Exome sequencing identifies frequent mutation of the SWI/SNF complex gene PBRM1 in renal carcinoma.</title>
        <authorList>
            <person name="Varela I."/>
            <person name="Tarpey P."/>
            <person name="Raine K."/>
            <person name="Huang D."/>
            <person name="Ong C.K."/>
            <person name="Stephens P."/>
            <person name="Davies H."/>
            <person name="Jones D."/>
            <person name="Lin M.L."/>
            <person name="Teague J."/>
            <person name="Bignell G."/>
            <person name="Butler A."/>
            <person name="Cho J."/>
            <person name="Dalgliesh G.L."/>
            <person name="Galappaththige D."/>
            <person name="Greenman C."/>
            <person name="Hardy C."/>
            <person name="Jia M."/>
            <person name="Latimer C."/>
            <person name="Lau K.W."/>
            <person name="Marshall J."/>
            <person name="McLaren S."/>
            <person name="Menzies A."/>
            <person name="Mudie L."/>
            <person name="Stebbings L."/>
            <person name="Largaespada D.A."/>
            <person name="Wessels L.F.A."/>
            <person name="Richard S."/>
            <person name="Kahnoski R.J."/>
            <person name="Anema J."/>
            <person name="Tuveson D.A."/>
            <person name="Perez-Mancera P.A."/>
            <person name="Mustonen V."/>
            <person name="Fischer A."/>
            <person name="Adams D.J."/>
            <person name="Rust A."/>
            <person name="Chan-On W."/>
            <person name="Subimerb C."/>
            <person name="Dykema K."/>
            <person name="Furge K."/>
            <person name="Campbell P.J."/>
            <person name="Teh B.T."/>
            <person name="Stratton M.R."/>
            <person name="Futreal P.A."/>
        </authorList>
    </citation>
    <scope>VARIANT CYS-16</scope>
</reference>
<keyword id="KW-0002">3D-structure</keyword>
<keyword id="KW-0007">Acetylation</keyword>
<keyword id="KW-0025">Alternative splicing</keyword>
<keyword id="KW-0963">Cytoplasm</keyword>
<keyword id="KW-0489">Methyltransferase</keyword>
<keyword id="KW-0496">Mitochondrion</keyword>
<keyword id="KW-0511">Multifunctional enzyme</keyword>
<keyword id="KW-0539">Nucleus</keyword>
<keyword id="KW-0597">Phosphoprotein</keyword>
<keyword id="KW-1267">Proteomics identification</keyword>
<keyword id="KW-1185">Reference proteome</keyword>
<keyword id="KW-0808">Transferase</keyword>
<sequence length="699" mass="78768">MNLLPKSSREFGSVDYWEKFFQQRGKKAFEWYGTYLELCGVLHKYIKPREKVLVIGCGNSELSEQLYDVGYRDIVNIDISEVVIKQMKECNATRRPQMSFLKMDMTQMEFPDASFQVVLDKGTLDAVLTDEEEKTLQQVDRMLAEVGRVLQVGGRYLCISLAQAHILKKAVGHFSREGWMVRVHQVANSQDQVLEAEPQFSLPVFAFIMTKFRPVPGSALQIFELCAQEQRKPVRLESAERLAEAVQERQQYAWLCSQLRRKARLGSVSLDLCDGDTGEPRYTLHVVDSPTVKPSRDNHFAIFIIPQGRETEWLFGMDEGRKQLAASAGFRRLITVALHRGQQYESMDHIQAELSARVMELAPAGMPTQQQVPFLSVGGDIGVRTVQHQDCSPLSGDYVIEDVQGDDKRYFRRLIFLSNRNVVQSEARLLKDVSHKAQKKRKKDRKKQRPADAEDLPAAPGQSIDKSYLCCEHHKAMIAGLALLRNPELLLEIPLALLVVGLGGGSLPLFVHDHFPKSCIDAVEIDPSMLEVATQWFGFSQSDRMKVHIADGLDYIASLAGGGEARPCYDVIMFDVDSKDPTLGMSCPPPAFVEQSFLQKVKSILTPEGVFILNLVCRDLGLKDSVLAGLKAVFPLLYVRRIEGEVNEILFCQLHPEQKLATPELLETAQALERTLRKPGRGWDDTYVLSDMLKTVKIV</sequence>
<organism>
    <name type="scientific">Homo sapiens</name>
    <name type="common">Human</name>
    <dbReference type="NCBI Taxonomy" id="9606"/>
    <lineage>
        <taxon>Eukaryota</taxon>
        <taxon>Metazoa</taxon>
        <taxon>Chordata</taxon>
        <taxon>Craniata</taxon>
        <taxon>Vertebrata</taxon>
        <taxon>Euteleostomi</taxon>
        <taxon>Mammalia</taxon>
        <taxon>Eutheria</taxon>
        <taxon>Euarchontoglires</taxon>
        <taxon>Primates</taxon>
        <taxon>Haplorrhini</taxon>
        <taxon>Catarrhini</taxon>
        <taxon>Hominidae</taxon>
        <taxon>Homo</taxon>
    </lineage>
</organism>
<gene>
    <name evidence="17" type="primary">METTL13</name>
    <name evidence="12" type="synonym">EEF1AKNMT</name>
    <name evidence="11" type="synonym">FEAT</name>
    <name evidence="17" type="synonym">KIAA0859</name>
    <name type="ORF">CGI-01</name>
</gene>
<protein>
    <recommendedName>
        <fullName evidence="12 15">eEF1A lysine and N-terminal methyltransferase</fullName>
        <shortName evidence="12">eEF1A-KNMT</shortName>
    </recommendedName>
    <alternativeName>
        <fullName evidence="10 17">Methyltransferase-like protein 13</fullName>
    </alternativeName>
    <domain>
        <recommendedName>
            <fullName evidence="12 13">eEF1A lysine methyltransferase</fullName>
            <ecNumber evidence="6 7">2.1.1.-</ecNumber>
        </recommendedName>
    </domain>
    <domain>
        <recommendedName>
            <fullName evidence="12">eEF1A N-terminal methyltransferase</fullName>
            <ecNumber evidence="6">2.1.1.-</ecNumber>
        </recommendedName>
    </domain>
</protein>